<accession>Q8DWE5</accession>
<name>LACD2_STRMU</name>
<keyword id="KW-0002">3D-structure</keyword>
<keyword id="KW-0423">Lactose metabolism</keyword>
<keyword id="KW-0456">Lyase</keyword>
<keyword id="KW-1185">Reference proteome</keyword>
<feature type="chain" id="PRO_0000203958" description="Tagatose 1,6-diphosphate aldolase 2">
    <location>
        <begin position="1"/>
        <end position="329"/>
    </location>
</feature>
<feature type="helix" evidence="2">
    <location>
        <begin position="5"/>
        <end position="13"/>
    </location>
</feature>
<feature type="strand" evidence="2">
    <location>
        <begin position="21"/>
        <end position="26"/>
    </location>
</feature>
<feature type="helix" evidence="2">
    <location>
        <begin position="30"/>
        <end position="37"/>
    </location>
</feature>
<feature type="turn" evidence="2">
    <location>
        <begin position="38"/>
        <end position="40"/>
    </location>
</feature>
<feature type="helix" evidence="2">
    <location>
        <begin position="46"/>
        <end position="60"/>
    </location>
</feature>
<feature type="helix" evidence="2">
    <location>
        <begin position="61"/>
        <end position="63"/>
    </location>
</feature>
<feature type="strand" evidence="2">
    <location>
        <begin position="64"/>
        <end position="69"/>
    </location>
</feature>
<feature type="turn" evidence="2">
    <location>
        <begin position="71"/>
        <end position="73"/>
    </location>
</feature>
<feature type="helix" evidence="2">
    <location>
        <begin position="75"/>
        <end position="79"/>
    </location>
</feature>
<feature type="strand" evidence="2">
    <location>
        <begin position="86"/>
        <end position="90"/>
    </location>
</feature>
<feature type="helix" evidence="2">
    <location>
        <begin position="113"/>
        <end position="118"/>
    </location>
</feature>
<feature type="strand" evidence="2">
    <location>
        <begin position="122"/>
        <end position="130"/>
    </location>
</feature>
<feature type="helix" evidence="2">
    <location>
        <begin position="136"/>
        <end position="156"/>
    </location>
</feature>
<feature type="strand" evidence="2">
    <location>
        <begin position="160"/>
        <end position="166"/>
    </location>
</feature>
<feature type="helix" evidence="2">
    <location>
        <begin position="177"/>
        <end position="180"/>
    </location>
</feature>
<feature type="helix" evidence="2">
    <location>
        <begin position="183"/>
        <end position="194"/>
    </location>
</feature>
<feature type="helix" evidence="2">
    <location>
        <begin position="197"/>
        <end position="199"/>
    </location>
</feature>
<feature type="strand" evidence="2">
    <location>
        <begin position="202"/>
        <end position="206"/>
    </location>
</feature>
<feature type="helix" evidence="2">
    <location>
        <begin position="212"/>
        <end position="214"/>
    </location>
</feature>
<feature type="turn" evidence="2">
    <location>
        <begin position="216"/>
        <end position="218"/>
    </location>
</feature>
<feature type="helix" evidence="2">
    <location>
        <begin position="227"/>
        <end position="239"/>
    </location>
</feature>
<feature type="strand" evidence="2">
    <location>
        <begin position="245"/>
        <end position="248"/>
    </location>
</feature>
<feature type="helix" evidence="2">
    <location>
        <begin position="254"/>
        <end position="267"/>
    </location>
</feature>
<feature type="strand" evidence="2">
    <location>
        <begin position="273"/>
        <end position="276"/>
    </location>
</feature>
<feature type="helix" evidence="2">
    <location>
        <begin position="278"/>
        <end position="281"/>
    </location>
</feature>
<feature type="helix" evidence="2">
    <location>
        <begin position="284"/>
        <end position="291"/>
    </location>
</feature>
<feature type="helix" evidence="2">
    <location>
        <begin position="293"/>
        <end position="300"/>
    </location>
</feature>
<feature type="helix" evidence="2">
    <location>
        <begin position="303"/>
        <end position="318"/>
    </location>
</feature>
<feature type="helix" evidence="2">
    <location>
        <begin position="322"/>
        <end position="324"/>
    </location>
</feature>
<evidence type="ECO:0000305" key="1"/>
<evidence type="ECO:0007829" key="2">
    <source>
        <dbReference type="PDB" id="3IV3"/>
    </source>
</evidence>
<reference key="1">
    <citation type="journal article" date="2002" name="Proc. Natl. Acad. Sci. U.S.A.">
        <title>Genome sequence of Streptococcus mutans UA159, a cariogenic dental pathogen.</title>
        <authorList>
            <person name="Ajdic D.J."/>
            <person name="McShan W.M."/>
            <person name="McLaughlin R.E."/>
            <person name="Savic G."/>
            <person name="Chang J."/>
            <person name="Carson M.B."/>
            <person name="Primeaux C."/>
            <person name="Tian R."/>
            <person name="Kenton S."/>
            <person name="Jia H.G."/>
            <person name="Lin S.P."/>
            <person name="Qian Y."/>
            <person name="Li S."/>
            <person name="Zhu H."/>
            <person name="Najar F.Z."/>
            <person name="Lai H."/>
            <person name="White J."/>
            <person name="Roe B.A."/>
            <person name="Ferretti J.J."/>
        </authorList>
    </citation>
    <scope>NUCLEOTIDE SEQUENCE [LARGE SCALE GENOMIC DNA]</scope>
    <source>
        <strain>ATCC 700610 / UA159</strain>
    </source>
</reference>
<sequence>MILSQQKYNYLAKVSDSNGVISALAFDQRGALKCLMAQYQMKEPTVAQMEELKVLVSEELTPYASSILLDPEYGLPAAQARDREAGLLLAYEKTGYDANTTSRLPDCLVDWSIKRLKEAGADAVKFLLYYDVDGDPQVNVQKQAYIERIGSECQAEDIPFFLEILTYDETISNNSSVEFAKVKVHKVNDAMKVFSAERFGIDVLKVEVPVNMVYVEGFAEGEVVYSKEEAAQAFREQEASTDLPYIYLSAGVSAELFQETLVFAHKAGAKFNGVLCGRATWAGSVQVYMEEGKEAARQWLRTSGLQNINELNKVLKTTASPWTEKVSVG</sequence>
<gene>
    <name type="primary">lacD2</name>
    <name type="ordered locus">SMU_116</name>
</gene>
<comment type="catalytic activity">
    <reaction>
        <text>D-tagatofuranose 1,6-bisphosphate = D-glyceraldehyde 3-phosphate + dihydroxyacetone phosphate</text>
        <dbReference type="Rhea" id="RHEA:22948"/>
        <dbReference type="ChEBI" id="CHEBI:57642"/>
        <dbReference type="ChEBI" id="CHEBI:58694"/>
        <dbReference type="ChEBI" id="CHEBI:59776"/>
        <dbReference type="EC" id="4.1.2.40"/>
    </reaction>
</comment>
<comment type="pathway">
    <text>Carbohydrate metabolism; D-tagatose 6-phosphate degradation; D-glyceraldehyde 3-phosphate and glycerone phosphate from D-tagatose 6-phosphate: step 2/2.</text>
</comment>
<comment type="similarity">
    <text evidence="1">Belongs to the aldolase LacD family.</text>
</comment>
<protein>
    <recommendedName>
        <fullName>Tagatose 1,6-diphosphate aldolase 2</fullName>
        <ecNumber>4.1.2.40</ecNumber>
    </recommendedName>
    <alternativeName>
        <fullName>D-tagatose-1,6-bisphosphate aldolase 2</fullName>
    </alternativeName>
    <alternativeName>
        <fullName>Tagatose-bisphosphate aldolase 2</fullName>
    </alternativeName>
</protein>
<dbReference type="EC" id="4.1.2.40"/>
<dbReference type="EMBL" id="AE014133">
    <property type="protein sequence ID" value="AAN57897.1"/>
    <property type="molecule type" value="Genomic_DNA"/>
</dbReference>
<dbReference type="RefSeq" id="NP_720591.1">
    <property type="nucleotide sequence ID" value="NC_004350.2"/>
</dbReference>
<dbReference type="PDB" id="3IV3">
    <property type="method" value="X-ray"/>
    <property type="resolution" value="1.80 A"/>
    <property type="chains" value="A=1-329"/>
</dbReference>
<dbReference type="PDBsum" id="3IV3"/>
<dbReference type="SMR" id="Q8DWE5"/>
<dbReference type="STRING" id="210007.SMU_116"/>
<dbReference type="KEGG" id="smu:SMU_116"/>
<dbReference type="eggNOG" id="COG3684">
    <property type="taxonomic scope" value="Bacteria"/>
</dbReference>
<dbReference type="HOGENOM" id="CLU_058971_0_1_9"/>
<dbReference type="OrthoDB" id="106309at2"/>
<dbReference type="PhylomeDB" id="Q8DWE5"/>
<dbReference type="UniPathway" id="UPA00704">
    <property type="reaction ID" value="UER00716"/>
</dbReference>
<dbReference type="EvolutionaryTrace" id="Q8DWE5"/>
<dbReference type="Proteomes" id="UP000002512">
    <property type="component" value="Chromosome"/>
</dbReference>
<dbReference type="GO" id="GO:0061595">
    <property type="term" value="F:6-deoxy-6-sulfofructose-1-phosphate aldolase activity"/>
    <property type="evidence" value="ECO:0007669"/>
    <property type="project" value="TreeGrafter"/>
</dbReference>
<dbReference type="GO" id="GO:0009024">
    <property type="term" value="F:tagatose-6-phosphate kinase activity"/>
    <property type="evidence" value="ECO:0007669"/>
    <property type="project" value="InterPro"/>
</dbReference>
<dbReference type="GO" id="GO:0009025">
    <property type="term" value="F:tagatose-bisphosphate aldolase activity"/>
    <property type="evidence" value="ECO:0007669"/>
    <property type="project" value="UniProtKB-UniRule"/>
</dbReference>
<dbReference type="GO" id="GO:1902777">
    <property type="term" value="P:6-sulfoquinovose(1-) catabolic process"/>
    <property type="evidence" value="ECO:0007669"/>
    <property type="project" value="TreeGrafter"/>
</dbReference>
<dbReference type="GO" id="GO:2001059">
    <property type="term" value="P:D-tagatose 6-phosphate catabolic process"/>
    <property type="evidence" value="ECO:0007669"/>
    <property type="project" value="UniProtKB-UniRule"/>
</dbReference>
<dbReference type="GO" id="GO:0019512">
    <property type="term" value="P:lactose catabolic process via tagatose-6-phosphate"/>
    <property type="evidence" value="ECO:0007669"/>
    <property type="project" value="InterPro"/>
</dbReference>
<dbReference type="FunFam" id="3.20.20.70:FF:000137">
    <property type="entry name" value="Tagatose 1,6-diphosphate aldolase 2"/>
    <property type="match status" value="1"/>
</dbReference>
<dbReference type="Gene3D" id="3.20.20.70">
    <property type="entry name" value="Aldolase class I"/>
    <property type="match status" value="1"/>
</dbReference>
<dbReference type="HAMAP" id="MF_00734">
    <property type="entry name" value="LacD"/>
    <property type="match status" value="1"/>
</dbReference>
<dbReference type="InterPro" id="IPR013785">
    <property type="entry name" value="Aldolase_TIM"/>
</dbReference>
<dbReference type="InterPro" id="IPR002915">
    <property type="entry name" value="DeoC/FbaB/LacD_aldolase"/>
</dbReference>
<dbReference type="InterPro" id="IPR050552">
    <property type="entry name" value="LacD_aldolase"/>
</dbReference>
<dbReference type="InterPro" id="IPR005927">
    <property type="entry name" value="Tag_1.6-dipho_adolase"/>
</dbReference>
<dbReference type="NCBIfam" id="TIGR01232">
    <property type="entry name" value="lacD"/>
    <property type="match status" value="1"/>
</dbReference>
<dbReference type="NCBIfam" id="NF003180">
    <property type="entry name" value="PRK04161.1"/>
    <property type="match status" value="1"/>
</dbReference>
<dbReference type="NCBIfam" id="NF009065">
    <property type="entry name" value="PRK12399.1"/>
    <property type="match status" value="1"/>
</dbReference>
<dbReference type="NCBIfam" id="NF009498">
    <property type="entry name" value="PRK12858.1"/>
    <property type="match status" value="1"/>
</dbReference>
<dbReference type="PANTHER" id="PTHR39340">
    <property type="entry name" value="SULFOFRUCTOSEPHOSPHATE ALDOLASE"/>
    <property type="match status" value="1"/>
</dbReference>
<dbReference type="PANTHER" id="PTHR39340:SF1">
    <property type="entry name" value="SULFOFRUCTOSEPHOSPHATE ALDOLASE"/>
    <property type="match status" value="1"/>
</dbReference>
<dbReference type="Pfam" id="PF01791">
    <property type="entry name" value="DeoC"/>
    <property type="match status" value="1"/>
</dbReference>
<dbReference type="SMART" id="SM01133">
    <property type="entry name" value="DeoC"/>
    <property type="match status" value="1"/>
</dbReference>
<dbReference type="SUPFAM" id="SSF51569">
    <property type="entry name" value="Aldolase"/>
    <property type="match status" value="1"/>
</dbReference>
<organism>
    <name type="scientific">Streptococcus mutans serotype c (strain ATCC 700610 / UA159)</name>
    <dbReference type="NCBI Taxonomy" id="210007"/>
    <lineage>
        <taxon>Bacteria</taxon>
        <taxon>Bacillati</taxon>
        <taxon>Bacillota</taxon>
        <taxon>Bacilli</taxon>
        <taxon>Lactobacillales</taxon>
        <taxon>Streptococcaceae</taxon>
        <taxon>Streptococcus</taxon>
    </lineage>
</organism>
<proteinExistence type="evidence at protein level"/>